<accession>Q9GQQ0</accession>
<accession>A1ZAA4</accession>
<accession>Q960X6</accession>
<accession>Q9GQP9</accession>
<accession>Q9GQQ1</accession>
<accession>Q9GQQ2</accession>
<accession>Q9GQQ3</accession>
<accession>Q9V7J3</accession>
<evidence type="ECO:0000255" key="1"/>
<evidence type="ECO:0000256" key="2">
    <source>
        <dbReference type="SAM" id="MobiDB-lite"/>
    </source>
</evidence>
<evidence type="ECO:0000269" key="3">
    <source>
    </source>
</evidence>
<evidence type="ECO:0000269" key="4">
    <source>
    </source>
</evidence>
<evidence type="ECO:0000269" key="5">
    <source>
    </source>
</evidence>
<evidence type="ECO:0000303" key="6">
    <source>
    </source>
</evidence>
<evidence type="ECO:0000303" key="7">
    <source ref="4"/>
</evidence>
<evidence type="ECO:0000305" key="8"/>
<sequence>MSLKHQKQSYQPLPTAAAMDNPAMIQSSGSSGSSSSEEGGSREDVANLSPLGLPTTYSSQQLMPSDTDSMEEERHRLRPHHHHHHPLGEHHHIPGIPPSAVVPSRLSSVGRSQWFTVTVLCFVNLINYMDRFTIAGVLTDVRNDFDIGNDSAGLLQTVFVISYMVCAPIFGYLGDRYSRPWIMAVGVGLWSTTTLLGSFMKQFGWFIAFRALVGIGEASYSTIAPTIISDLFVHDMRSKMLALFYFAIPVGSGLGYIVGSKTAHLANDWRWALRVTPILGIVAVFLILLIKDPVRGHSEGSHNLEATTYKQDIKALVRNRSFMLSTAGFTCVAFVAGALAWWGPSFIYLGMKMQPGNENIVQDDVAFNFGVITMLAGLLGVPLGSFLSQYLVKRYPTADPVICAFGLLVSAPLLTGACLLVNSNSVGTYALIFFGQLALNLNWAIVADILLYVVVPTRRSTAEAFQILISHALGDAGSPYLVGAISEAIMKHLHKNPSDSGLTTELRSMSQVAGSAISNATQVIAEATTSLMETARSSASQEYSDVEQFEGLQYALFSTSFVEVLGGIFFIFTACFIIKDKYNATRGLQDATAQQQQRDERGQIA</sequence>
<reference key="1">
    <citation type="journal article" date="2001" name="Mol. Cell. Biol.">
        <title>Mutations in the novel membrane protein spinster interfere with programmed cell death and cause neural degeneration in Drosophila melanogaster.</title>
        <authorList>
            <person name="Nakano Y."/>
            <person name="Fujitani K."/>
            <person name="Kurihara J."/>
            <person name="Ragan J."/>
            <person name="Usui-Aoki K."/>
            <person name="Shimoda L."/>
            <person name="Lukacsovich T."/>
            <person name="Suzuki K."/>
            <person name="Sezaki M."/>
            <person name="Sano Y."/>
            <person name="Ueda R."/>
            <person name="Awano W."/>
            <person name="Kaneda M."/>
            <person name="Umeda M."/>
            <person name="Yamamoto D."/>
        </authorList>
    </citation>
    <scope>NUCLEOTIDE SEQUENCE [MRNA] (ISOFORMS A; B; C; D AND E)</scope>
    <scope>DISRUPTION PHENOTYPE</scope>
</reference>
<reference key="2">
    <citation type="journal article" date="2000" name="Science">
        <title>The genome sequence of Drosophila melanogaster.</title>
        <authorList>
            <person name="Adams M.D."/>
            <person name="Celniker S.E."/>
            <person name="Holt R.A."/>
            <person name="Evans C.A."/>
            <person name="Gocayne J.D."/>
            <person name="Amanatides P.G."/>
            <person name="Scherer S.E."/>
            <person name="Li P.W."/>
            <person name="Hoskins R.A."/>
            <person name="Galle R.F."/>
            <person name="George R.A."/>
            <person name="Lewis S.E."/>
            <person name="Richards S."/>
            <person name="Ashburner M."/>
            <person name="Henderson S.N."/>
            <person name="Sutton G.G."/>
            <person name="Wortman J.R."/>
            <person name="Yandell M.D."/>
            <person name="Zhang Q."/>
            <person name="Chen L.X."/>
            <person name="Brandon R.C."/>
            <person name="Rogers Y.-H.C."/>
            <person name="Blazej R.G."/>
            <person name="Champe M."/>
            <person name="Pfeiffer B.D."/>
            <person name="Wan K.H."/>
            <person name="Doyle C."/>
            <person name="Baxter E.G."/>
            <person name="Helt G."/>
            <person name="Nelson C.R."/>
            <person name="Miklos G.L.G."/>
            <person name="Abril J.F."/>
            <person name="Agbayani A."/>
            <person name="An H.-J."/>
            <person name="Andrews-Pfannkoch C."/>
            <person name="Baldwin D."/>
            <person name="Ballew R.M."/>
            <person name="Basu A."/>
            <person name="Baxendale J."/>
            <person name="Bayraktaroglu L."/>
            <person name="Beasley E.M."/>
            <person name="Beeson K.Y."/>
            <person name="Benos P.V."/>
            <person name="Berman B.P."/>
            <person name="Bhandari D."/>
            <person name="Bolshakov S."/>
            <person name="Borkova D."/>
            <person name="Botchan M.R."/>
            <person name="Bouck J."/>
            <person name="Brokstein P."/>
            <person name="Brottier P."/>
            <person name="Burtis K.C."/>
            <person name="Busam D.A."/>
            <person name="Butler H."/>
            <person name="Cadieu E."/>
            <person name="Center A."/>
            <person name="Chandra I."/>
            <person name="Cherry J.M."/>
            <person name="Cawley S."/>
            <person name="Dahlke C."/>
            <person name="Davenport L.B."/>
            <person name="Davies P."/>
            <person name="de Pablos B."/>
            <person name="Delcher A."/>
            <person name="Deng Z."/>
            <person name="Mays A.D."/>
            <person name="Dew I."/>
            <person name="Dietz S.M."/>
            <person name="Dodson K."/>
            <person name="Doup L.E."/>
            <person name="Downes M."/>
            <person name="Dugan-Rocha S."/>
            <person name="Dunkov B.C."/>
            <person name="Dunn P."/>
            <person name="Durbin K.J."/>
            <person name="Evangelista C.C."/>
            <person name="Ferraz C."/>
            <person name="Ferriera S."/>
            <person name="Fleischmann W."/>
            <person name="Fosler C."/>
            <person name="Gabrielian A.E."/>
            <person name="Garg N.S."/>
            <person name="Gelbart W.M."/>
            <person name="Glasser K."/>
            <person name="Glodek A."/>
            <person name="Gong F."/>
            <person name="Gorrell J.H."/>
            <person name="Gu Z."/>
            <person name="Guan P."/>
            <person name="Harris M."/>
            <person name="Harris N.L."/>
            <person name="Harvey D.A."/>
            <person name="Heiman T.J."/>
            <person name="Hernandez J.R."/>
            <person name="Houck J."/>
            <person name="Hostin D."/>
            <person name="Houston K.A."/>
            <person name="Howland T.J."/>
            <person name="Wei M.-H."/>
            <person name="Ibegwam C."/>
            <person name="Jalali M."/>
            <person name="Kalush F."/>
            <person name="Karpen G.H."/>
            <person name="Ke Z."/>
            <person name="Kennison J.A."/>
            <person name="Ketchum K.A."/>
            <person name="Kimmel B.E."/>
            <person name="Kodira C.D."/>
            <person name="Kraft C.L."/>
            <person name="Kravitz S."/>
            <person name="Kulp D."/>
            <person name="Lai Z."/>
            <person name="Lasko P."/>
            <person name="Lei Y."/>
            <person name="Levitsky A.A."/>
            <person name="Li J.H."/>
            <person name="Li Z."/>
            <person name="Liang Y."/>
            <person name="Lin X."/>
            <person name="Liu X."/>
            <person name="Mattei B."/>
            <person name="McIntosh T.C."/>
            <person name="McLeod M.P."/>
            <person name="McPherson D."/>
            <person name="Merkulov G."/>
            <person name="Milshina N.V."/>
            <person name="Mobarry C."/>
            <person name="Morris J."/>
            <person name="Moshrefi A."/>
            <person name="Mount S.M."/>
            <person name="Moy M."/>
            <person name="Murphy B."/>
            <person name="Murphy L."/>
            <person name="Muzny D.M."/>
            <person name="Nelson D.L."/>
            <person name="Nelson D.R."/>
            <person name="Nelson K.A."/>
            <person name="Nixon K."/>
            <person name="Nusskern D.R."/>
            <person name="Pacleb J.M."/>
            <person name="Palazzolo M."/>
            <person name="Pittman G.S."/>
            <person name="Pan S."/>
            <person name="Pollard J."/>
            <person name="Puri V."/>
            <person name="Reese M.G."/>
            <person name="Reinert K."/>
            <person name="Remington K."/>
            <person name="Saunders R.D.C."/>
            <person name="Scheeler F."/>
            <person name="Shen H."/>
            <person name="Shue B.C."/>
            <person name="Siden-Kiamos I."/>
            <person name="Simpson M."/>
            <person name="Skupski M.P."/>
            <person name="Smith T.J."/>
            <person name="Spier E."/>
            <person name="Spradling A.C."/>
            <person name="Stapleton M."/>
            <person name="Strong R."/>
            <person name="Sun E."/>
            <person name="Svirskas R."/>
            <person name="Tector C."/>
            <person name="Turner R."/>
            <person name="Venter E."/>
            <person name="Wang A.H."/>
            <person name="Wang X."/>
            <person name="Wang Z.-Y."/>
            <person name="Wassarman D.A."/>
            <person name="Weinstock G.M."/>
            <person name="Weissenbach J."/>
            <person name="Williams S.M."/>
            <person name="Woodage T."/>
            <person name="Worley K.C."/>
            <person name="Wu D."/>
            <person name="Yang S."/>
            <person name="Yao Q.A."/>
            <person name="Ye J."/>
            <person name="Yeh R.-F."/>
            <person name="Zaveri J.S."/>
            <person name="Zhan M."/>
            <person name="Zhang G."/>
            <person name="Zhao Q."/>
            <person name="Zheng L."/>
            <person name="Zheng X.H."/>
            <person name="Zhong F.N."/>
            <person name="Zhong W."/>
            <person name="Zhou X."/>
            <person name="Zhu S.C."/>
            <person name="Zhu X."/>
            <person name="Smith H.O."/>
            <person name="Gibbs R.A."/>
            <person name="Myers E.W."/>
            <person name="Rubin G.M."/>
            <person name="Venter J.C."/>
        </authorList>
    </citation>
    <scope>NUCLEOTIDE SEQUENCE [LARGE SCALE GENOMIC DNA]</scope>
    <source>
        <strain>Berkeley</strain>
    </source>
</reference>
<reference key="3">
    <citation type="journal article" date="2002" name="Genome Biol.">
        <title>Annotation of the Drosophila melanogaster euchromatic genome: a systematic review.</title>
        <authorList>
            <person name="Misra S."/>
            <person name="Crosby M.A."/>
            <person name="Mungall C.J."/>
            <person name="Matthews B.B."/>
            <person name="Campbell K.S."/>
            <person name="Hradecky P."/>
            <person name="Huang Y."/>
            <person name="Kaminker J.S."/>
            <person name="Millburn G.H."/>
            <person name="Prochnik S.E."/>
            <person name="Smith C.D."/>
            <person name="Tupy J.L."/>
            <person name="Whitfield E.J."/>
            <person name="Bayraktaroglu L."/>
            <person name="Berman B.P."/>
            <person name="Bettencourt B.R."/>
            <person name="Celniker S.E."/>
            <person name="de Grey A.D.N.J."/>
            <person name="Drysdale R.A."/>
            <person name="Harris N.L."/>
            <person name="Richter J."/>
            <person name="Russo S."/>
            <person name="Schroeder A.J."/>
            <person name="Shu S.Q."/>
            <person name="Stapleton M."/>
            <person name="Yamada C."/>
            <person name="Ashburner M."/>
            <person name="Gelbart W.M."/>
            <person name="Rubin G.M."/>
            <person name="Lewis S.E."/>
        </authorList>
    </citation>
    <scope>GENOME REANNOTATION</scope>
    <source>
        <strain>Berkeley</strain>
    </source>
</reference>
<reference key="4">
    <citation type="submission" date="2008-05" db="EMBL/GenBank/DDBJ databases">
        <authorList>
            <person name="Carlson J.W."/>
            <person name="Booth B."/>
            <person name="Frise E."/>
            <person name="Park S."/>
            <person name="Wan K.H."/>
            <person name="Yu C."/>
            <person name="Celniker S.E."/>
        </authorList>
    </citation>
    <scope>NUCLEOTIDE SEQUENCE [LARGE SCALE MRNA] (ISOFORM C)</scope>
    <source>
        <strain>Berkeley</strain>
        <tissue>Embryo</tissue>
    </source>
</reference>
<reference key="5">
    <citation type="journal article" date="2002" name="Genome Biol.">
        <title>A Drosophila full-length cDNA resource.</title>
        <authorList>
            <person name="Stapleton M."/>
            <person name="Carlson J.W."/>
            <person name="Brokstein P."/>
            <person name="Yu C."/>
            <person name="Champe M."/>
            <person name="George R.A."/>
            <person name="Guarin H."/>
            <person name="Kronmiller B."/>
            <person name="Pacleb J.M."/>
            <person name="Park S."/>
            <person name="Wan K.H."/>
            <person name="Rubin G.M."/>
            <person name="Celniker S.E."/>
        </authorList>
    </citation>
    <scope>NUCLEOTIDE SEQUENCE [LARGE SCALE MRNA] OF 74-605 (ISOFORM A)</scope>
    <source>
        <strain>Berkeley</strain>
        <tissue>Embryo</tissue>
    </source>
</reference>
<reference key="6">
    <citation type="journal article" date="2002" name="Neuron">
        <title>Unrestricted synaptic growth in spinster-a late endosomal protein implicated in TGF-beta-mediated synaptic growth regulation.</title>
        <authorList>
            <person name="Sweeney S.T."/>
            <person name="Davis G.W."/>
        </authorList>
    </citation>
    <scope>FUNCTION</scope>
    <scope>SUBCELLULAR LOCATION</scope>
    <scope>TISSUE SPECIFICITY</scope>
    <scope>DEVELOPMENTAL STAGE</scope>
    <scope>DISRUPTION PHENOTYPE</scope>
</reference>
<reference key="7">
    <citation type="journal article" date="2005" name="J. Cell Biol.">
        <title>Aberrant lysosomal carbohydrate storage accompanies endocytic defects and neurodegeneration in Drosophila benchwarmer.</title>
        <authorList>
            <person name="Dermaut B."/>
            <person name="Norga K.K."/>
            <person name="Kania A."/>
            <person name="Verstreken P."/>
            <person name="Pan H."/>
            <person name="Zhou Y."/>
            <person name="Callaerts P."/>
            <person name="Bellen H.J."/>
        </authorList>
    </citation>
    <scope>FUNCTION</scope>
    <scope>TISSUE SPECIFICITY</scope>
    <scope>DISRUPTION PHENOTYPE</scope>
    <scope>MUTAGENESIS OF GLU-217</scope>
</reference>
<dbReference type="EMBL" id="AF212366">
    <property type="protein sequence ID" value="AAG43825.1"/>
    <property type="molecule type" value="mRNA"/>
</dbReference>
<dbReference type="EMBL" id="AF212367">
    <property type="protein sequence ID" value="AAG43826.1"/>
    <property type="molecule type" value="mRNA"/>
</dbReference>
<dbReference type="EMBL" id="AF212368">
    <property type="protein sequence ID" value="AAG43827.1"/>
    <property type="molecule type" value="mRNA"/>
</dbReference>
<dbReference type="EMBL" id="AF212369">
    <property type="protein sequence ID" value="AAG43828.1"/>
    <property type="molecule type" value="mRNA"/>
</dbReference>
<dbReference type="EMBL" id="AF212370">
    <property type="protein sequence ID" value="AAG43829.1"/>
    <property type="molecule type" value="mRNA"/>
</dbReference>
<dbReference type="EMBL" id="AE013599">
    <property type="protein sequence ID" value="AAF58060.2"/>
    <property type="molecule type" value="Genomic_DNA"/>
</dbReference>
<dbReference type="EMBL" id="AE013599">
    <property type="protein sequence ID" value="AAM70950.1"/>
    <property type="molecule type" value="Genomic_DNA"/>
</dbReference>
<dbReference type="EMBL" id="AE013599">
    <property type="protein sequence ID" value="AAM70951.1"/>
    <property type="molecule type" value="Genomic_DNA"/>
</dbReference>
<dbReference type="EMBL" id="AE013599">
    <property type="protein sequence ID" value="AAM70952.1"/>
    <property type="molecule type" value="Genomic_DNA"/>
</dbReference>
<dbReference type="EMBL" id="AE013599">
    <property type="protein sequence ID" value="AAM70953.1"/>
    <property type="molecule type" value="Genomic_DNA"/>
</dbReference>
<dbReference type="EMBL" id="BT032842">
    <property type="protein sequence ID" value="ACD81856.1"/>
    <property type="molecule type" value="mRNA"/>
</dbReference>
<dbReference type="EMBL" id="AY051792">
    <property type="protein sequence ID" value="AAK93216.1"/>
    <property type="status" value="ALT_INIT"/>
    <property type="molecule type" value="mRNA"/>
</dbReference>
<dbReference type="RefSeq" id="NP_524823.1">
    <molecule id="Q9GQQ0-4"/>
    <property type="nucleotide sequence ID" value="NM_080084.3"/>
</dbReference>
<dbReference type="RefSeq" id="NP_725530.1">
    <molecule id="Q9GQQ0-3"/>
    <property type="nucleotide sequence ID" value="NM_166144.2"/>
</dbReference>
<dbReference type="RefSeq" id="NP_725531.1">
    <molecule id="Q9GQQ0-1"/>
    <property type="nucleotide sequence ID" value="NM_166145.2"/>
</dbReference>
<dbReference type="RefSeq" id="NP_725532.1">
    <molecule id="Q9GQQ0-2"/>
    <property type="nucleotide sequence ID" value="NM_166146.2"/>
</dbReference>
<dbReference type="RefSeq" id="NP_725533.1">
    <molecule id="Q9GQQ0-5"/>
    <property type="nucleotide sequence ID" value="NM_166147.2"/>
</dbReference>
<dbReference type="SMR" id="Q9GQQ0"/>
<dbReference type="BioGRID" id="69637">
    <property type="interactions" value="24"/>
</dbReference>
<dbReference type="FunCoup" id="Q9GQQ0">
    <property type="interactions" value="813"/>
</dbReference>
<dbReference type="IntAct" id="Q9GQQ0">
    <property type="interactions" value="12"/>
</dbReference>
<dbReference type="STRING" id="7227.FBpp0088549"/>
<dbReference type="TCDB" id="2.A.1.49.1">
    <property type="family name" value="the major facilitator superfamily (mfs)"/>
</dbReference>
<dbReference type="GlyCosmos" id="Q9GQQ0">
    <property type="glycosylation" value="4 sites, No reported glycans"/>
</dbReference>
<dbReference type="GlyGen" id="Q9GQQ0">
    <property type="glycosylation" value="4 sites"/>
</dbReference>
<dbReference type="PaxDb" id="7227-FBpp0088549"/>
<dbReference type="DNASU" id="45380"/>
<dbReference type="EnsemblMetazoa" id="FBtr0089589">
    <molecule id="Q9GQQ0-5"/>
    <property type="protein sequence ID" value="FBpp0088548"/>
    <property type="gene ID" value="FBgn0086676"/>
</dbReference>
<dbReference type="EnsemblMetazoa" id="FBtr0089590">
    <molecule id="Q9GQQ0-4"/>
    <property type="protein sequence ID" value="FBpp0088549"/>
    <property type="gene ID" value="FBgn0086676"/>
</dbReference>
<dbReference type="EnsemblMetazoa" id="FBtr0089591">
    <molecule id="Q9GQQ0-3"/>
    <property type="protein sequence ID" value="FBpp0088550"/>
    <property type="gene ID" value="FBgn0086676"/>
</dbReference>
<dbReference type="EnsemblMetazoa" id="FBtr0089592">
    <molecule id="Q9GQQ0-2"/>
    <property type="protein sequence ID" value="FBpp0088551"/>
    <property type="gene ID" value="FBgn0086676"/>
</dbReference>
<dbReference type="EnsemblMetazoa" id="FBtr0089593">
    <molecule id="Q9GQQ0-1"/>
    <property type="protein sequence ID" value="FBpp0088552"/>
    <property type="gene ID" value="FBgn0086676"/>
</dbReference>
<dbReference type="GeneID" id="45380"/>
<dbReference type="KEGG" id="dme:Dmel_CG8428"/>
<dbReference type="UCSC" id="CG8428-RA">
    <molecule id="Q9GQQ0-1"/>
    <property type="organism name" value="d. melanogaster"/>
</dbReference>
<dbReference type="UCSC" id="CG8428-RB">
    <property type="organism name" value="d. melanogaster"/>
</dbReference>
<dbReference type="UCSC" id="CG8428-RC">
    <property type="organism name" value="d. melanogaster"/>
</dbReference>
<dbReference type="UCSC" id="CG8428-RD">
    <property type="organism name" value="d. melanogaster"/>
</dbReference>
<dbReference type="UCSC" id="CG8428-RE">
    <property type="organism name" value="d. melanogaster"/>
</dbReference>
<dbReference type="AGR" id="FB:FBgn0086676"/>
<dbReference type="CTD" id="45380"/>
<dbReference type="FlyBase" id="FBgn0086676">
    <property type="gene designation" value="spin"/>
</dbReference>
<dbReference type="VEuPathDB" id="VectorBase:FBgn0086676"/>
<dbReference type="eggNOG" id="KOG1330">
    <property type="taxonomic scope" value="Eukaryota"/>
</dbReference>
<dbReference type="GeneTree" id="ENSGT00390000005976"/>
<dbReference type="HOGENOM" id="CLU_001265_5_12_1"/>
<dbReference type="InParanoid" id="Q9GQQ0"/>
<dbReference type="OMA" id="YICAAGL"/>
<dbReference type="OrthoDB" id="6770063at2759"/>
<dbReference type="PhylomeDB" id="Q9GQQ0"/>
<dbReference type="Reactome" id="R-DME-1660661">
    <property type="pathway name" value="Sphingolipid de novo biosynthesis"/>
</dbReference>
<dbReference type="BioGRID-ORCS" id="45380">
    <property type="hits" value="0 hits in 3 CRISPR screens"/>
</dbReference>
<dbReference type="GenomeRNAi" id="45380"/>
<dbReference type="PRO" id="PR:Q9GQQ0"/>
<dbReference type="Proteomes" id="UP000000803">
    <property type="component" value="Chromosome 2R"/>
</dbReference>
<dbReference type="Bgee" id="FBgn0086676">
    <property type="expression patterns" value="Expressed in embryonic/larval hemocyte (Drosophila) and 206 other cell types or tissues"/>
</dbReference>
<dbReference type="ExpressionAtlas" id="Q9GQQ0">
    <property type="expression patterns" value="baseline and differential"/>
</dbReference>
<dbReference type="GO" id="GO:0031902">
    <property type="term" value="C:late endosome membrane"/>
    <property type="evidence" value="ECO:0000314"/>
    <property type="project" value="UniProtKB"/>
</dbReference>
<dbReference type="GO" id="GO:0005765">
    <property type="term" value="C:lysosomal membrane"/>
    <property type="evidence" value="ECO:0007669"/>
    <property type="project" value="UniProtKB-SubCell"/>
</dbReference>
<dbReference type="GO" id="GO:0016020">
    <property type="term" value="C:membrane"/>
    <property type="evidence" value="ECO:0000255"/>
    <property type="project" value="FlyBase"/>
</dbReference>
<dbReference type="GO" id="GO:0098793">
    <property type="term" value="C:presynapse"/>
    <property type="evidence" value="ECO:0007669"/>
    <property type="project" value="GOC"/>
</dbReference>
<dbReference type="GO" id="GO:0031982">
    <property type="term" value="C:vesicle"/>
    <property type="evidence" value="ECO:0000314"/>
    <property type="project" value="FlyBase"/>
</dbReference>
<dbReference type="GO" id="GO:0022857">
    <property type="term" value="F:transmembrane transporter activity"/>
    <property type="evidence" value="ECO:0000255"/>
    <property type="project" value="FlyBase"/>
</dbReference>
<dbReference type="GO" id="GO:0009267">
    <property type="term" value="P:cellular response to starvation"/>
    <property type="evidence" value="ECO:0000315"/>
    <property type="project" value="FlyBase"/>
</dbReference>
<dbReference type="GO" id="GO:0007619">
    <property type="term" value="P:courtship behavior"/>
    <property type="evidence" value="ECO:0000303"/>
    <property type="project" value="FlyBase"/>
</dbReference>
<dbReference type="GO" id="GO:0006897">
    <property type="term" value="P:endocytosis"/>
    <property type="evidence" value="ECO:0000315"/>
    <property type="project" value="FlyBase"/>
</dbReference>
<dbReference type="GO" id="GO:0008333">
    <property type="term" value="P:endosome to lysosome transport"/>
    <property type="evidence" value="ECO:0000315"/>
    <property type="project" value="FlyBase"/>
</dbReference>
<dbReference type="GO" id="GO:0010001">
    <property type="term" value="P:glial cell differentiation"/>
    <property type="evidence" value="ECO:0000315"/>
    <property type="project" value="FlyBase"/>
</dbReference>
<dbReference type="GO" id="GO:0008347">
    <property type="term" value="P:glial cell migration"/>
    <property type="evidence" value="ECO:0000315"/>
    <property type="project" value="FlyBase"/>
</dbReference>
<dbReference type="GO" id="GO:0035193">
    <property type="term" value="P:larval central nervous system remodeling"/>
    <property type="evidence" value="ECO:0000315"/>
    <property type="project" value="FlyBase"/>
</dbReference>
<dbReference type="GO" id="GO:0006869">
    <property type="term" value="P:lipid transport"/>
    <property type="evidence" value="ECO:0007669"/>
    <property type="project" value="UniProtKB-KW"/>
</dbReference>
<dbReference type="GO" id="GO:0040011">
    <property type="term" value="P:locomotion"/>
    <property type="evidence" value="ECO:0000315"/>
    <property type="project" value="FlyBase"/>
</dbReference>
<dbReference type="GO" id="GO:0007040">
    <property type="term" value="P:lysosome organization"/>
    <property type="evidence" value="ECO:0000315"/>
    <property type="project" value="FlyBase"/>
</dbReference>
<dbReference type="GO" id="GO:0030514">
    <property type="term" value="P:negative regulation of BMP signaling pathway"/>
    <property type="evidence" value="ECO:0000316"/>
    <property type="project" value="FlyBase"/>
</dbReference>
<dbReference type="GO" id="GO:0045476">
    <property type="term" value="P:nurse cell apoptotic process"/>
    <property type="evidence" value="ECO:0000315"/>
    <property type="project" value="FlyBase"/>
</dbReference>
<dbReference type="GO" id="GO:0048477">
    <property type="term" value="P:oogenesis"/>
    <property type="evidence" value="ECO:0000315"/>
    <property type="project" value="FlyBase"/>
</dbReference>
<dbReference type="GO" id="GO:0012501">
    <property type="term" value="P:programmed cell death"/>
    <property type="evidence" value="ECO:0000303"/>
    <property type="project" value="FlyBase"/>
</dbReference>
<dbReference type="GO" id="GO:0045924">
    <property type="term" value="P:regulation of female receptivity"/>
    <property type="evidence" value="ECO:0000315"/>
    <property type="project" value="FlyBase"/>
</dbReference>
<dbReference type="GO" id="GO:0045477">
    <property type="term" value="P:regulation of nurse cell apoptotic process"/>
    <property type="evidence" value="ECO:0000315"/>
    <property type="project" value="FlyBase"/>
</dbReference>
<dbReference type="GO" id="GO:0043067">
    <property type="term" value="P:regulation of programmed cell death"/>
    <property type="evidence" value="ECO:0000315"/>
    <property type="project" value="FlyBase"/>
</dbReference>
<dbReference type="GO" id="GO:0008582">
    <property type="term" value="P:regulation of synaptic assembly at neuromuscular junction"/>
    <property type="evidence" value="ECO:0000315"/>
    <property type="project" value="FlyBase"/>
</dbReference>
<dbReference type="GO" id="GO:0051124">
    <property type="term" value="P:synaptic assembly at neuromuscular junction"/>
    <property type="evidence" value="ECO:0000315"/>
    <property type="project" value="UniProtKB"/>
</dbReference>
<dbReference type="GO" id="GO:0048488">
    <property type="term" value="P:synaptic vesicle endocytosis"/>
    <property type="evidence" value="ECO:0000315"/>
    <property type="project" value="FlyBase"/>
</dbReference>
<dbReference type="GO" id="GO:0055085">
    <property type="term" value="P:transmembrane transport"/>
    <property type="evidence" value="ECO:0000255"/>
    <property type="project" value="FlyBase"/>
</dbReference>
<dbReference type="CDD" id="cd17328">
    <property type="entry name" value="MFS_spinster_like"/>
    <property type="match status" value="1"/>
</dbReference>
<dbReference type="FunFam" id="1.20.1250.20:FF:000711">
    <property type="entry name" value="Uncharacterized protein, isoform B"/>
    <property type="match status" value="1"/>
</dbReference>
<dbReference type="Gene3D" id="1.20.1250.20">
    <property type="entry name" value="MFS general substrate transporter like domains"/>
    <property type="match status" value="1"/>
</dbReference>
<dbReference type="InterPro" id="IPR011701">
    <property type="entry name" value="MFS"/>
</dbReference>
<dbReference type="InterPro" id="IPR020846">
    <property type="entry name" value="MFS_dom"/>
</dbReference>
<dbReference type="InterPro" id="IPR044770">
    <property type="entry name" value="MFS_spinster-like"/>
</dbReference>
<dbReference type="InterPro" id="IPR036259">
    <property type="entry name" value="MFS_trans_sf"/>
</dbReference>
<dbReference type="PANTHER" id="PTHR23505:SF79">
    <property type="entry name" value="PROTEIN SPINSTER"/>
    <property type="match status" value="1"/>
</dbReference>
<dbReference type="PANTHER" id="PTHR23505">
    <property type="entry name" value="SPINSTER"/>
    <property type="match status" value="1"/>
</dbReference>
<dbReference type="Pfam" id="PF07690">
    <property type="entry name" value="MFS_1"/>
    <property type="match status" value="1"/>
</dbReference>
<dbReference type="SUPFAM" id="SSF103473">
    <property type="entry name" value="MFS general substrate transporter"/>
    <property type="match status" value="1"/>
</dbReference>
<dbReference type="PROSITE" id="PS50850">
    <property type="entry name" value="MFS"/>
    <property type="match status" value="1"/>
</dbReference>
<gene>
    <name type="primary">spin</name>
    <name type="synonym">bnch</name>
    <name type="ORF">CG8428</name>
</gene>
<keyword id="KW-0025">Alternative splicing</keyword>
<keyword id="KW-0217">Developmental protein</keyword>
<keyword id="KW-0221">Differentiation</keyword>
<keyword id="KW-0967">Endosome</keyword>
<keyword id="KW-0325">Glycoprotein</keyword>
<keyword id="KW-0445">Lipid transport</keyword>
<keyword id="KW-0458">Lysosome</keyword>
<keyword id="KW-0472">Membrane</keyword>
<keyword id="KW-0896">Oogenesis</keyword>
<keyword id="KW-1185">Reference proteome</keyword>
<keyword id="KW-0812">Transmembrane</keyword>
<keyword id="KW-1133">Transmembrane helix</keyword>
<keyword id="KW-0813">Transport</keyword>
<name>SPIN_DROME</name>
<proteinExistence type="evidence at protein level"/>
<feature type="chain" id="PRO_0000363955" description="Protein spinster">
    <location>
        <begin position="1"/>
        <end position="605"/>
    </location>
</feature>
<feature type="transmembrane region" description="Helical" evidence="1">
    <location>
        <begin position="115"/>
        <end position="137"/>
    </location>
</feature>
<feature type="transmembrane region" description="Helical" evidence="1">
    <location>
        <begin position="153"/>
        <end position="173"/>
    </location>
</feature>
<feature type="transmembrane region" description="Helical" evidence="1">
    <location>
        <begin position="180"/>
        <end position="200"/>
    </location>
</feature>
<feature type="transmembrane region" description="Helical" evidence="1">
    <location>
        <begin position="203"/>
        <end position="223"/>
    </location>
</feature>
<feature type="transmembrane region" description="Helical" evidence="1">
    <location>
        <begin position="240"/>
        <end position="260"/>
    </location>
</feature>
<feature type="transmembrane region" description="Helical" evidence="1">
    <location>
        <begin position="271"/>
        <end position="291"/>
    </location>
</feature>
<feature type="transmembrane region" description="Helical" evidence="1">
    <location>
        <begin position="329"/>
        <end position="349"/>
    </location>
</feature>
<feature type="transmembrane region" description="Helical" evidence="1">
    <location>
        <begin position="367"/>
        <end position="387"/>
    </location>
</feature>
<feature type="transmembrane region" description="Helical" evidence="1">
    <location>
        <begin position="401"/>
        <end position="421"/>
    </location>
</feature>
<feature type="transmembrane region" description="Helical" evidence="1">
    <location>
        <begin position="431"/>
        <end position="451"/>
    </location>
</feature>
<feature type="transmembrane region" description="Helical" evidence="1">
    <location>
        <begin position="465"/>
        <end position="485"/>
    </location>
</feature>
<feature type="transmembrane region" description="Helical" evidence="1">
    <location>
        <begin position="558"/>
        <end position="578"/>
    </location>
</feature>
<feature type="region of interest" description="Disordered" evidence="2">
    <location>
        <begin position="1"/>
        <end position="94"/>
    </location>
</feature>
<feature type="compositionally biased region" description="Low complexity" evidence="2">
    <location>
        <begin position="27"/>
        <end position="38"/>
    </location>
</feature>
<feature type="compositionally biased region" description="Polar residues" evidence="2">
    <location>
        <begin position="55"/>
        <end position="67"/>
    </location>
</feature>
<feature type="compositionally biased region" description="Basic residues" evidence="2">
    <location>
        <begin position="76"/>
        <end position="85"/>
    </location>
</feature>
<feature type="glycosylation site" description="N-linked (GlcNAc...) asparagine" evidence="1">
    <location>
        <position position="149"/>
    </location>
</feature>
<feature type="glycosylation site" description="N-linked (GlcNAc...) asparagine" evidence="1">
    <location>
        <position position="319"/>
    </location>
</feature>
<feature type="glycosylation site" description="N-linked (GlcNAc...) asparagine" evidence="1">
    <location>
        <position position="519"/>
    </location>
</feature>
<feature type="glycosylation site" description="N-linked (GlcNAc...) asparagine" evidence="1">
    <location>
        <position position="583"/>
    </location>
</feature>
<feature type="splice variant" id="VSP_036366" description="In isoform E." evidence="6">
    <original>VAFNFGVITMLAGLLGVPLGSFLSQYLVKRYPTADPVICAFGLLVSAPLLTGACLLVNSNSVGTYALIFFGQLALNLNWAIVADILLYVVVPTRRSTAEAFQILISHALGDAGSPYLVGAISEAIMKHLHKNPSDSGLTTELRSMSQVAGSAISNATQVIAEATTSLMETARSSASQEYSDVEQFEGLQYALFSTSFVEVLGGIFFIFTACFIIKDKYNATRGLQDATAQQQQRDERGQIA</original>
    <variation>MWWFPRDVQQPRPSKSSSHTHSVMPAVRIWLEQSPRPS</variation>
    <location>
        <begin position="365"/>
        <end position="605"/>
    </location>
</feature>
<feature type="splice variant" id="VSP_036367" description="In isoform B and isoform C." evidence="6 7">
    <original>VAFNFGVITMLAGLLGVPLGSFLSQYLVKRYPTADPVICAFGLLVSAPLLTGACLLVNSNSVGTYALIFFGQLALNLNWA</original>
    <variation>ISYKFGLVAMLAGLIGVPLGSFLAQRLRGRYENCDPYICAVGLFISAPMVFAALVVPQTSESLCFFFVFVAQVALNLCWS</variation>
    <location>
        <begin position="365"/>
        <end position="444"/>
    </location>
</feature>
<feature type="splice variant" id="VSP_036368" description="In isoform B and isoform D." evidence="6">
    <original>DATAQQQQRDERGQIA</original>
    <variation>GDQGAQAVRSSVALASGQKDVESFNSDCLVLCTDIALRERT</variation>
    <location>
        <begin position="590"/>
        <end position="605"/>
    </location>
</feature>
<feature type="mutagenesis site" description="In bnch(N); leads to storage in yolk spheres during oogenesis and results in widespread accumulation of enlarged lysosomal and late endosomal inclusions." evidence="5">
    <original>E</original>
    <variation>K</variation>
    <location>
        <position position="217"/>
    </location>
</feature>
<feature type="sequence conflict" description="In Ref. 1; AAG43829." evidence="8" ref="1">
    <original>P</original>
    <variation>Q</variation>
    <location sequence="Q9GQQ0-5">
        <position position="389"/>
    </location>
</feature>
<organism>
    <name type="scientific">Drosophila melanogaster</name>
    <name type="common">Fruit fly</name>
    <dbReference type="NCBI Taxonomy" id="7227"/>
    <lineage>
        <taxon>Eukaryota</taxon>
        <taxon>Metazoa</taxon>
        <taxon>Ecdysozoa</taxon>
        <taxon>Arthropoda</taxon>
        <taxon>Hexapoda</taxon>
        <taxon>Insecta</taxon>
        <taxon>Pterygota</taxon>
        <taxon>Neoptera</taxon>
        <taxon>Endopterygota</taxon>
        <taxon>Diptera</taxon>
        <taxon>Brachycera</taxon>
        <taxon>Muscomorpha</taxon>
        <taxon>Ephydroidea</taxon>
        <taxon>Drosophilidae</taxon>
        <taxon>Drosophila</taxon>
        <taxon>Sophophora</taxon>
    </lineage>
</organism>
<protein>
    <recommendedName>
        <fullName>Protein spinster</fullName>
    </recommendedName>
    <alternativeName>
        <fullName>Protein benchwarmer</fullName>
    </alternativeName>
    <alternativeName>
        <fullName>Protein diphthong</fullName>
    </alternativeName>
</protein>
<comment type="function">
    <text evidence="4 5">Probable sphingolipid transporter that plays a central role in endosomes and/or lysosomes storage. Involved in TGF-beta-mediated synaptic growth regulation both pre- and postsynaptically via its function in endosomal storage regulation. Also required during oogenesis by regulating yolk spheres storage.</text>
</comment>
<comment type="subcellular location">
    <subcellularLocation>
        <location evidence="4">Late endosome membrane</location>
        <topology evidence="4">Multi-pass membrane protein</topology>
    </subcellularLocation>
    <subcellularLocation>
        <location evidence="4">Lysosome membrane</location>
        <topology evidence="4">Multi-pass membrane protein</topology>
    </subcellularLocation>
</comment>
<comment type="alternative products">
    <event type="alternative splicing"/>
    <isoform>
        <id>Q9GQQ0-1</id>
        <name>A</name>
        <name>Type IV</name>
        <sequence type="displayed"/>
    </isoform>
    <isoform>
        <id>Q9GQQ0-2</id>
        <name>B</name>
        <name>Type I</name>
        <sequence type="described" ref="VSP_036367 VSP_036368"/>
    </isoform>
    <isoform>
        <id>Q9GQQ0-3</id>
        <name>C</name>
        <name>Type III</name>
        <sequence type="described" ref="VSP_036367"/>
    </isoform>
    <isoform>
        <id>Q9GQQ0-4</id>
        <name>D</name>
        <name>Type II</name>
        <sequence type="described" ref="VSP_036368"/>
    </isoform>
    <isoform>
        <id>Q9GQQ0-5</id>
        <name>E</name>
        <name>Type V</name>
        <sequence type="described" ref="VSP_036366"/>
    </isoform>
</comment>
<comment type="tissue specificity">
    <text evidence="4 5">Enriched in brain (at protein level).</text>
</comment>
<comment type="developmental stage">
    <text evidence="4">Expressed in both motoneurons and muscle throughout the period of synaptic growth and development at the neuromuscular junction. Expressed throughout the CNS, including motoneurons. Weak expression is observed in embryonic muscle as well as other tissues. Expressed throughout the larval CNS with pronounced expression in motoneurons. Also strongly expressed in all body wall muscle as well as other tissues, including a subset of epithelial cells and the salivary glands.</text>
</comment>
<comment type="disruption phenotype">
    <text evidence="3 4 5">In most cases, death at the late pupal stage, probably due to lipid accumulation in endosomes/lysosomes. Some flies survive until adulthood and display a strong rejection behavior of female flies in response to male courtship accompanied by decreases in the viability, adult life span, and oviposition rate of the flies. Some oocytes and adult neural cells undergo degeneration, which is preceded by reductions in programmed cell death of nurse cells in ovaries and of neurons in the pupal nervous system, respectively. The central nervous system (CNS) of flies accumulates lipopigments. Flies also display a strong synaptic overgrowth: synapses reveal a strong increase in bouton number and a deficit in presynaptic release caused by enhanced/misregulated TGF-beta signaling. A widespread accumulation of enlarged lysosomal and late endosomal inclusions is also present in yolk spheres during oogenesis.</text>
</comment>
<comment type="similarity">
    <text evidence="8">Belongs to the major facilitator superfamily. Spinster (TC 2.A.1.49) family.</text>
</comment>
<comment type="sequence caution" evidence="8">
    <conflict type="erroneous initiation">
        <sequence resource="EMBL-CDS" id="AAK93216"/>
    </conflict>
    <text>Truncated N-terminus.</text>
</comment>